<proteinExistence type="predicted"/>
<sequence>MPRKITSYKTSLQGLREENEDVELMNLNLLLTGKPNNPKYAPIDLFIVCDGHGGKEVAEYVAPRLNRYIMNNNNTFPLHRQHVAKIYDAIQNELIGKGIARTWWMYCSSYY</sequence>
<feature type="chain" id="PRO_0000244061" description="Uncharacterized protein R306">
    <location>
        <begin position="1"/>
        <end position="111"/>
    </location>
</feature>
<feature type="domain" description="PPM-type phosphatase" evidence="2">
    <location>
        <begin position="6"/>
        <end position="111"/>
    </location>
</feature>
<feature type="coiled-coil region" evidence="1">
    <location>
        <begin position="3"/>
        <end position="29"/>
    </location>
</feature>
<name>YR306_MIMIV</name>
<gene>
    <name type="ordered locus">MIMI_R306</name>
</gene>
<dbReference type="EMBL" id="AY653733">
    <property type="protein sequence ID" value="AAV50578.1"/>
    <property type="molecule type" value="Genomic_DNA"/>
</dbReference>
<dbReference type="SMR" id="Q5UPY7"/>
<dbReference type="Proteomes" id="UP000001134">
    <property type="component" value="Genome"/>
</dbReference>
<dbReference type="Gene3D" id="3.60.40.10">
    <property type="entry name" value="PPM-type phosphatase domain"/>
    <property type="match status" value="1"/>
</dbReference>
<dbReference type="InterPro" id="IPR036457">
    <property type="entry name" value="PPM-type-like_dom_sf"/>
</dbReference>
<dbReference type="InterPro" id="IPR001932">
    <property type="entry name" value="PPM-type_phosphatase-like_dom"/>
</dbReference>
<dbReference type="Pfam" id="PF00481">
    <property type="entry name" value="PP2C"/>
    <property type="match status" value="1"/>
</dbReference>
<dbReference type="SUPFAM" id="SSF81606">
    <property type="entry name" value="PP2C-like"/>
    <property type="match status" value="1"/>
</dbReference>
<dbReference type="PROSITE" id="PS51746">
    <property type="entry name" value="PPM_2"/>
    <property type="match status" value="1"/>
</dbReference>
<organism>
    <name type="scientific">Acanthamoeba polyphaga mimivirus</name>
    <name type="common">APMV</name>
    <dbReference type="NCBI Taxonomy" id="212035"/>
    <lineage>
        <taxon>Viruses</taxon>
        <taxon>Varidnaviria</taxon>
        <taxon>Bamfordvirae</taxon>
        <taxon>Nucleocytoviricota</taxon>
        <taxon>Megaviricetes</taxon>
        <taxon>Imitervirales</taxon>
        <taxon>Mimiviridae</taxon>
        <taxon>Megamimivirinae</taxon>
        <taxon>Mimivirus</taxon>
        <taxon>Mimivirus bradfordmassiliense</taxon>
    </lineage>
</organism>
<evidence type="ECO:0000255" key="1"/>
<evidence type="ECO:0000255" key="2">
    <source>
        <dbReference type="PROSITE-ProRule" id="PRU01082"/>
    </source>
</evidence>
<accession>Q5UPY7</accession>
<organismHost>
    <name type="scientific">Acanthamoeba polyphaga</name>
    <name type="common">Amoeba</name>
    <dbReference type="NCBI Taxonomy" id="5757"/>
</organismHost>
<keyword id="KW-0175">Coiled coil</keyword>
<keyword id="KW-1185">Reference proteome</keyword>
<protein>
    <recommendedName>
        <fullName>Uncharacterized protein R306</fullName>
    </recommendedName>
</protein>
<reference key="1">
    <citation type="journal article" date="2004" name="Science">
        <title>The 1.2-megabase genome sequence of Mimivirus.</title>
        <authorList>
            <person name="Raoult D."/>
            <person name="Audic S."/>
            <person name="Robert C."/>
            <person name="Abergel C."/>
            <person name="Renesto P."/>
            <person name="Ogata H."/>
            <person name="La Scola B."/>
            <person name="Susan M."/>
            <person name="Claverie J.-M."/>
        </authorList>
    </citation>
    <scope>NUCLEOTIDE SEQUENCE [LARGE SCALE GENOMIC DNA]</scope>
    <source>
        <strain>Rowbotham-Bradford</strain>
    </source>
</reference>